<name>ANXD3_ARATH</name>
<proteinExistence type="evidence at transcript level"/>
<keyword id="KW-0007">Acetylation</keyword>
<keyword id="KW-0041">Annexin</keyword>
<keyword id="KW-0106">Calcium</keyword>
<keyword id="KW-0111">Calcium/phospholipid-binding</keyword>
<keyword id="KW-0479">Metal-binding</keyword>
<keyword id="KW-0597">Phosphoprotein</keyword>
<keyword id="KW-1185">Reference proteome</keyword>
<keyword id="KW-0677">Repeat</keyword>
<protein>
    <recommendedName>
        <fullName>Annexin D3</fullName>
    </recommendedName>
    <alternativeName>
        <fullName>AnnAt3</fullName>
    </alternativeName>
</protein>
<comment type="tissue specificity">
    <text evidence="4">Expressed mainly in roots and flowers. Lower in stems and leaves.</text>
</comment>
<comment type="induction">
    <text evidence="5">Up-regulated by cold and dehydration stresses. Down-regulated by heat shock stress.</text>
</comment>
<comment type="domain">
    <text>A pair of annexin repeats may form one binding site for calcium and phospholipid.</text>
</comment>
<comment type="similarity">
    <text evidence="6">Belongs to the annexin (TC 1.A.31.1) family.</text>
</comment>
<organism>
    <name type="scientific">Arabidopsis thaliana</name>
    <name type="common">Mouse-ear cress</name>
    <dbReference type="NCBI Taxonomy" id="3702"/>
    <lineage>
        <taxon>Eukaryota</taxon>
        <taxon>Viridiplantae</taxon>
        <taxon>Streptophyta</taxon>
        <taxon>Embryophyta</taxon>
        <taxon>Tracheophyta</taxon>
        <taxon>Spermatophyta</taxon>
        <taxon>Magnoliopsida</taxon>
        <taxon>eudicotyledons</taxon>
        <taxon>Gunneridae</taxon>
        <taxon>Pentapetalae</taxon>
        <taxon>rosids</taxon>
        <taxon>malvids</taxon>
        <taxon>Brassicales</taxon>
        <taxon>Brassicaceae</taxon>
        <taxon>Camelineae</taxon>
        <taxon>Arabidopsis</taxon>
    </lineage>
</organism>
<dbReference type="EMBL" id="AF188362">
    <property type="protein sequence ID" value="AAF14580.1"/>
    <property type="molecule type" value="mRNA"/>
</dbReference>
<dbReference type="EMBL" id="AC005499">
    <property type="protein sequence ID" value="AAC67342.1"/>
    <property type="molecule type" value="Genomic_DNA"/>
</dbReference>
<dbReference type="EMBL" id="CP002685">
    <property type="protein sequence ID" value="AEC09581.1"/>
    <property type="molecule type" value="Genomic_DNA"/>
</dbReference>
<dbReference type="EMBL" id="BT006420">
    <property type="protein sequence ID" value="AAP21228.1"/>
    <property type="molecule type" value="mRNA"/>
</dbReference>
<dbReference type="EMBL" id="AY087221">
    <property type="protein sequence ID" value="AAM64777.1"/>
    <property type="molecule type" value="mRNA"/>
</dbReference>
<dbReference type="EMBL" id="AK227695">
    <property type="protein sequence ID" value="BAE99682.1"/>
    <property type="molecule type" value="mRNA"/>
</dbReference>
<dbReference type="PIR" id="A84809">
    <property type="entry name" value="A84809"/>
</dbReference>
<dbReference type="RefSeq" id="NP_181410.1">
    <property type="nucleotide sequence ID" value="NM_129433.5"/>
</dbReference>
<dbReference type="SMR" id="Q9SE45"/>
<dbReference type="BioGRID" id="3800">
    <property type="interactions" value="4"/>
</dbReference>
<dbReference type="FunCoup" id="Q9SE45">
    <property type="interactions" value="50"/>
</dbReference>
<dbReference type="STRING" id="3702.Q9SE45"/>
<dbReference type="iPTMnet" id="Q9SE45"/>
<dbReference type="PaxDb" id="3702-AT2G38760.1"/>
<dbReference type="ProteomicsDB" id="244482"/>
<dbReference type="EnsemblPlants" id="AT2G38760.1">
    <property type="protein sequence ID" value="AT2G38760.1"/>
    <property type="gene ID" value="AT2G38760"/>
</dbReference>
<dbReference type="GeneID" id="818458"/>
<dbReference type="Gramene" id="AT2G38760.1">
    <property type="protein sequence ID" value="AT2G38760.1"/>
    <property type="gene ID" value="AT2G38760"/>
</dbReference>
<dbReference type="KEGG" id="ath:AT2G38760"/>
<dbReference type="Araport" id="AT2G38760"/>
<dbReference type="TAIR" id="AT2G38760">
    <property type="gene designation" value="ANNAT3"/>
</dbReference>
<dbReference type="eggNOG" id="KOG0819">
    <property type="taxonomic scope" value="Eukaryota"/>
</dbReference>
<dbReference type="HOGENOM" id="CLU_025300_0_1_1"/>
<dbReference type="InParanoid" id="Q9SE45"/>
<dbReference type="OMA" id="VRGPLMQ"/>
<dbReference type="PhylomeDB" id="Q9SE45"/>
<dbReference type="CD-CODE" id="4299E36E">
    <property type="entry name" value="Nucleolus"/>
</dbReference>
<dbReference type="PRO" id="PR:Q9SE45"/>
<dbReference type="Proteomes" id="UP000006548">
    <property type="component" value="Chromosome 2"/>
</dbReference>
<dbReference type="ExpressionAtlas" id="Q9SE45">
    <property type="expression patterns" value="baseline and differential"/>
</dbReference>
<dbReference type="GO" id="GO:0000325">
    <property type="term" value="C:plant-type vacuole"/>
    <property type="evidence" value="ECO:0007005"/>
    <property type="project" value="TAIR"/>
</dbReference>
<dbReference type="GO" id="GO:0005509">
    <property type="term" value="F:calcium ion binding"/>
    <property type="evidence" value="ECO:0000250"/>
    <property type="project" value="UniProtKB"/>
</dbReference>
<dbReference type="GO" id="GO:0005544">
    <property type="term" value="F:calcium-dependent phospholipid binding"/>
    <property type="evidence" value="ECO:0007669"/>
    <property type="project" value="UniProtKB-KW"/>
</dbReference>
<dbReference type="GO" id="GO:0009409">
    <property type="term" value="P:response to cold"/>
    <property type="evidence" value="ECO:0000270"/>
    <property type="project" value="TAIR"/>
</dbReference>
<dbReference type="GO" id="GO:0009408">
    <property type="term" value="P:response to heat"/>
    <property type="evidence" value="ECO:0000270"/>
    <property type="project" value="TAIR"/>
</dbReference>
<dbReference type="GO" id="GO:0009651">
    <property type="term" value="P:response to salt stress"/>
    <property type="evidence" value="ECO:0000270"/>
    <property type="project" value="TAIR"/>
</dbReference>
<dbReference type="GO" id="GO:0009414">
    <property type="term" value="P:response to water deprivation"/>
    <property type="evidence" value="ECO:0000270"/>
    <property type="project" value="TAIR"/>
</dbReference>
<dbReference type="FunFam" id="1.10.220.10:FF:000001">
    <property type="entry name" value="Annexin"/>
    <property type="match status" value="1"/>
</dbReference>
<dbReference type="FunFam" id="1.10.220.10:FF:000006">
    <property type="entry name" value="Annexin"/>
    <property type="match status" value="1"/>
</dbReference>
<dbReference type="FunFam" id="1.10.220.10:FF:000008">
    <property type="entry name" value="Annexin"/>
    <property type="match status" value="1"/>
</dbReference>
<dbReference type="FunFam" id="1.10.220.10:FF:000009">
    <property type="entry name" value="Annexin"/>
    <property type="match status" value="1"/>
</dbReference>
<dbReference type="Gene3D" id="1.10.220.10">
    <property type="entry name" value="Annexin"/>
    <property type="match status" value="4"/>
</dbReference>
<dbReference type="InterPro" id="IPR001464">
    <property type="entry name" value="Annexin"/>
</dbReference>
<dbReference type="InterPro" id="IPR018502">
    <property type="entry name" value="Annexin_repeat"/>
</dbReference>
<dbReference type="InterPro" id="IPR018252">
    <property type="entry name" value="Annexin_repeat_CS"/>
</dbReference>
<dbReference type="InterPro" id="IPR037104">
    <property type="entry name" value="Annexin_sf"/>
</dbReference>
<dbReference type="PANTHER" id="PTHR10502">
    <property type="entry name" value="ANNEXIN"/>
    <property type="match status" value="1"/>
</dbReference>
<dbReference type="PANTHER" id="PTHR10502:SF99">
    <property type="entry name" value="ANNEXIN D3"/>
    <property type="match status" value="1"/>
</dbReference>
<dbReference type="Pfam" id="PF00191">
    <property type="entry name" value="Annexin"/>
    <property type="match status" value="4"/>
</dbReference>
<dbReference type="PRINTS" id="PR00196">
    <property type="entry name" value="ANNEXIN"/>
</dbReference>
<dbReference type="SMART" id="SM00335">
    <property type="entry name" value="ANX"/>
    <property type="match status" value="4"/>
</dbReference>
<dbReference type="SUPFAM" id="SSF47874">
    <property type="entry name" value="Annexin"/>
    <property type="match status" value="1"/>
</dbReference>
<dbReference type="PROSITE" id="PS00223">
    <property type="entry name" value="ANNEXIN_1"/>
    <property type="match status" value="1"/>
</dbReference>
<dbReference type="PROSITE" id="PS51897">
    <property type="entry name" value="ANNEXIN_2"/>
    <property type="match status" value="4"/>
</dbReference>
<accession>Q9SE45</accession>
<accession>Q9ZVJ7</accession>
<evidence type="ECO:0000250" key="1">
    <source>
        <dbReference type="UniProtKB" id="P93157"/>
    </source>
</evidence>
<evidence type="ECO:0000250" key="2">
    <source>
        <dbReference type="UniProtKB" id="Q9SYT0"/>
    </source>
</evidence>
<evidence type="ECO:0000255" key="3">
    <source>
        <dbReference type="PROSITE-ProRule" id="PRU01245"/>
    </source>
</evidence>
<evidence type="ECO:0000269" key="4">
    <source>
    </source>
</evidence>
<evidence type="ECO:0000269" key="5">
    <source>
    </source>
</evidence>
<evidence type="ECO:0000305" key="6"/>
<sequence length="321" mass="36255">MATIRVPNEVPSPAQDSETLKQAIRGWGTDEKAIIRVLGQRDQSQRRKIRESFREIYGKDLIDVLSSELSGDFMKAVVSWTYDPAERDARLVNKILNKEKKKKSLENLKVIVEISCTTSPNHLIAVRKAYCSLFDSSLEEHIASSLPFPLAKLLVTLASTFRYDKDRTDAEVATIEAAMLREAIEKKQLDHDHVLYILGTRSIYQLRETFVAYKKNYGVTIDKDVDGCPGDADLRSLLKVAIFCIDTPEKHFAKVVRDSIEGFGTDEDSLTRAIVTRAEIDLMKVRGEYFNMYNTSMDNAITGDISGDYKDFIITLLGSKI</sequence>
<feature type="initiator methionine" description="Removed" evidence="2">
    <location>
        <position position="1"/>
    </location>
</feature>
<feature type="chain" id="PRO_0000278817" description="Annexin D3">
    <location>
        <begin position="2"/>
        <end position="321"/>
    </location>
</feature>
<feature type="repeat" description="Annexin 1" evidence="3">
    <location>
        <begin position="11"/>
        <end position="82"/>
    </location>
</feature>
<feature type="repeat" description="Annexin 2" evidence="3">
    <location>
        <begin position="83"/>
        <end position="159"/>
    </location>
</feature>
<feature type="repeat" description="Annexin 3" evidence="3">
    <location>
        <begin position="171"/>
        <end position="243"/>
    </location>
</feature>
<feature type="repeat" description="Annexin 4" evidence="3">
    <location>
        <begin position="247"/>
        <end position="318"/>
    </location>
</feature>
<feature type="binding site" evidence="1">
    <location>
        <position position="26"/>
    </location>
    <ligand>
        <name>Ca(2+)</name>
        <dbReference type="ChEBI" id="CHEBI:29108"/>
        <label>1</label>
    </ligand>
</feature>
<feature type="binding site" evidence="1">
    <location>
        <position position="28"/>
    </location>
    <ligand>
        <name>Ca(2+)</name>
        <dbReference type="ChEBI" id="CHEBI:29108"/>
        <label>1</label>
    </ligand>
</feature>
<feature type="binding site" evidence="1">
    <location>
        <position position="68"/>
    </location>
    <ligand>
        <name>Ca(2+)</name>
        <dbReference type="ChEBI" id="CHEBI:29108"/>
        <label>1</label>
    </ligand>
</feature>
<feature type="binding site" evidence="1">
    <location>
        <position position="260"/>
    </location>
    <ligand>
        <name>Ca(2+)</name>
        <dbReference type="ChEBI" id="CHEBI:29108"/>
        <label>2</label>
    </ligand>
</feature>
<feature type="binding site" evidence="1">
    <location>
        <position position="264"/>
    </location>
    <ligand>
        <name>Ca(2+)</name>
        <dbReference type="ChEBI" id="CHEBI:29108"/>
        <label>2</label>
    </ligand>
</feature>
<feature type="binding site" evidence="1">
    <location>
        <position position="304"/>
    </location>
    <ligand>
        <name>Ca(2+)</name>
        <dbReference type="ChEBI" id="CHEBI:29108"/>
        <label>2</label>
    </ligand>
</feature>
<feature type="modified residue" description="N-acetylalanine" evidence="2">
    <location>
        <position position="2"/>
    </location>
</feature>
<feature type="modified residue" description="Phosphothreonine" evidence="2">
    <location>
        <position position="117"/>
    </location>
</feature>
<feature type="modified residue" description="Phosphotyrosine" evidence="2">
    <location>
        <position position="289"/>
    </location>
</feature>
<feature type="sequence conflict" description="In Ref. 1; AAF14580." evidence="6" ref="1">
    <original>I</original>
    <variation>T</variation>
    <location>
        <position position="34"/>
    </location>
</feature>
<gene>
    <name type="primary">ANN3</name>
    <name type="synonym">ANNAT3</name>
    <name type="ordered locus">At2g38760</name>
    <name type="ORF">T6A23.4</name>
</gene>
<reference key="1">
    <citation type="online journal article" date="1999" name="Plant Gene Register">
        <title>Isolation and characterization of two novel Arabidopsis annexin cDNAs.</title>
        <authorList>
            <person name="Clark G.B."/>
            <person name="Rives A.E."/>
            <person name="Beauchamp L.M."/>
            <person name="Roux S.J."/>
        </authorList>
        <locator>PGR99-168</locator>
    </citation>
    <scope>NUCLEOTIDE SEQUENCE [MRNA]</scope>
</reference>
<reference key="2">
    <citation type="journal article" date="1999" name="Nature">
        <title>Sequence and analysis of chromosome 2 of the plant Arabidopsis thaliana.</title>
        <authorList>
            <person name="Lin X."/>
            <person name="Kaul S."/>
            <person name="Rounsley S.D."/>
            <person name="Shea T.P."/>
            <person name="Benito M.-I."/>
            <person name="Town C.D."/>
            <person name="Fujii C.Y."/>
            <person name="Mason T.M."/>
            <person name="Bowman C.L."/>
            <person name="Barnstead M.E."/>
            <person name="Feldblyum T.V."/>
            <person name="Buell C.R."/>
            <person name="Ketchum K.A."/>
            <person name="Lee J.J."/>
            <person name="Ronning C.M."/>
            <person name="Koo H.L."/>
            <person name="Moffat K.S."/>
            <person name="Cronin L.A."/>
            <person name="Shen M."/>
            <person name="Pai G."/>
            <person name="Van Aken S."/>
            <person name="Umayam L."/>
            <person name="Tallon L.J."/>
            <person name="Gill J.E."/>
            <person name="Adams M.D."/>
            <person name="Carrera A.J."/>
            <person name="Creasy T.H."/>
            <person name="Goodman H.M."/>
            <person name="Somerville C.R."/>
            <person name="Copenhaver G.P."/>
            <person name="Preuss D."/>
            <person name="Nierman W.C."/>
            <person name="White O."/>
            <person name="Eisen J.A."/>
            <person name="Salzberg S.L."/>
            <person name="Fraser C.M."/>
            <person name="Venter J.C."/>
        </authorList>
    </citation>
    <scope>NUCLEOTIDE SEQUENCE [LARGE SCALE GENOMIC DNA]</scope>
    <source>
        <strain>cv. Columbia</strain>
    </source>
</reference>
<reference key="3">
    <citation type="journal article" date="2017" name="Plant J.">
        <title>Araport11: a complete reannotation of the Arabidopsis thaliana reference genome.</title>
        <authorList>
            <person name="Cheng C.Y."/>
            <person name="Krishnakumar V."/>
            <person name="Chan A.P."/>
            <person name="Thibaud-Nissen F."/>
            <person name="Schobel S."/>
            <person name="Town C.D."/>
        </authorList>
    </citation>
    <scope>GENOME REANNOTATION</scope>
    <source>
        <strain>cv. Columbia</strain>
    </source>
</reference>
<reference key="4">
    <citation type="journal article" date="2003" name="Science">
        <title>Empirical analysis of transcriptional activity in the Arabidopsis genome.</title>
        <authorList>
            <person name="Yamada K."/>
            <person name="Lim J."/>
            <person name="Dale J.M."/>
            <person name="Chen H."/>
            <person name="Shinn P."/>
            <person name="Palm C.J."/>
            <person name="Southwick A.M."/>
            <person name="Wu H.C."/>
            <person name="Kim C.J."/>
            <person name="Nguyen M."/>
            <person name="Pham P.K."/>
            <person name="Cheuk R.F."/>
            <person name="Karlin-Newmann G."/>
            <person name="Liu S.X."/>
            <person name="Lam B."/>
            <person name="Sakano H."/>
            <person name="Wu T."/>
            <person name="Yu G."/>
            <person name="Miranda M."/>
            <person name="Quach H.L."/>
            <person name="Tripp M."/>
            <person name="Chang C.H."/>
            <person name="Lee J.M."/>
            <person name="Toriumi M.J."/>
            <person name="Chan M.M."/>
            <person name="Tang C.C."/>
            <person name="Onodera C.S."/>
            <person name="Deng J.M."/>
            <person name="Akiyama K."/>
            <person name="Ansari Y."/>
            <person name="Arakawa T."/>
            <person name="Banh J."/>
            <person name="Banno F."/>
            <person name="Bowser L."/>
            <person name="Brooks S.Y."/>
            <person name="Carninci P."/>
            <person name="Chao Q."/>
            <person name="Choy N."/>
            <person name="Enju A."/>
            <person name="Goldsmith A.D."/>
            <person name="Gurjal M."/>
            <person name="Hansen N.F."/>
            <person name="Hayashizaki Y."/>
            <person name="Johnson-Hopson C."/>
            <person name="Hsuan V.W."/>
            <person name="Iida K."/>
            <person name="Karnes M."/>
            <person name="Khan S."/>
            <person name="Koesema E."/>
            <person name="Ishida J."/>
            <person name="Jiang P.X."/>
            <person name="Jones T."/>
            <person name="Kawai J."/>
            <person name="Kamiya A."/>
            <person name="Meyers C."/>
            <person name="Nakajima M."/>
            <person name="Narusaka M."/>
            <person name="Seki M."/>
            <person name="Sakurai T."/>
            <person name="Satou M."/>
            <person name="Tamse R."/>
            <person name="Vaysberg M."/>
            <person name="Wallender E.K."/>
            <person name="Wong C."/>
            <person name="Yamamura Y."/>
            <person name="Yuan S."/>
            <person name="Shinozaki K."/>
            <person name="Davis R.W."/>
            <person name="Theologis A."/>
            <person name="Ecker J.R."/>
        </authorList>
    </citation>
    <scope>NUCLEOTIDE SEQUENCE [LARGE SCALE MRNA]</scope>
    <source>
        <strain>cv. Columbia</strain>
    </source>
</reference>
<reference key="5">
    <citation type="submission" date="2002-03" db="EMBL/GenBank/DDBJ databases">
        <title>Full-length cDNA from Arabidopsis thaliana.</title>
        <authorList>
            <person name="Brover V.V."/>
            <person name="Troukhan M.E."/>
            <person name="Alexandrov N.A."/>
            <person name="Lu Y.-P."/>
            <person name="Flavell R.B."/>
            <person name="Feldmann K.A."/>
        </authorList>
    </citation>
    <scope>NUCLEOTIDE SEQUENCE [LARGE SCALE MRNA]</scope>
</reference>
<reference key="6">
    <citation type="submission" date="2006-07" db="EMBL/GenBank/DDBJ databases">
        <title>Large-scale analysis of RIKEN Arabidopsis full-length (RAFL) cDNAs.</title>
        <authorList>
            <person name="Totoki Y."/>
            <person name="Seki M."/>
            <person name="Ishida J."/>
            <person name="Nakajima M."/>
            <person name="Enju A."/>
            <person name="Kamiya A."/>
            <person name="Narusaka M."/>
            <person name="Shin-i T."/>
            <person name="Nakagawa M."/>
            <person name="Sakamoto N."/>
            <person name="Oishi K."/>
            <person name="Kohara Y."/>
            <person name="Kobayashi M."/>
            <person name="Toyoda A."/>
            <person name="Sakaki Y."/>
            <person name="Sakurai T."/>
            <person name="Iida K."/>
            <person name="Akiyama K."/>
            <person name="Satou M."/>
            <person name="Toyoda T."/>
            <person name="Konagaya A."/>
            <person name="Carninci P."/>
            <person name="Kawai J."/>
            <person name="Hayashizaki Y."/>
            <person name="Shinozaki K."/>
        </authorList>
    </citation>
    <scope>NUCLEOTIDE SEQUENCE [LARGE SCALE MRNA]</scope>
    <source>
        <strain>cv. Columbia</strain>
    </source>
</reference>
<reference key="7">
    <citation type="journal article" date="2001" name="Plant Physiol.">
        <title>Differential expression of members of the annexin multigene family in Arabidopsis.</title>
        <authorList>
            <person name="Clark G.B."/>
            <person name="Sessions A."/>
            <person name="Eastburn D.J."/>
            <person name="Roux S.J."/>
        </authorList>
    </citation>
    <scope>TISSUE SPECIFICITY</scope>
</reference>
<reference key="8">
    <citation type="journal article" date="2006" name="Plant Physiol. Biochem.">
        <title>Expression profiling of the Arabidopsis annexin gene family during germination, de-etiolation and abiotic stress.</title>
        <authorList>
            <person name="Cantero A."/>
            <person name="Barthakur S."/>
            <person name="Bushart T.J."/>
            <person name="Chou S."/>
            <person name="Morgan R.O."/>
            <person name="Fernandez M.P."/>
            <person name="Clark G.B."/>
            <person name="Roux S.J."/>
        </authorList>
    </citation>
    <scope>INDUCTION</scope>
    <scope>GENE FAMILY</scope>
</reference>